<protein>
    <recommendedName>
        <fullName evidence="1">NAD-dependent protein deacetylase</fullName>
        <ecNumber evidence="1 2">2.3.1.286</ecNumber>
    </recommendedName>
    <alternativeName>
        <fullName evidence="1">Regulatory protein SIR2 homolog</fullName>
    </alternativeName>
</protein>
<gene>
    <name evidence="1" type="primary">cobB</name>
    <name type="ordered locus">SAOUHSC_02457</name>
</gene>
<feature type="chain" id="PRO_0000110355" description="NAD-dependent protein deacetylase">
    <location>
        <begin position="1"/>
        <end position="243"/>
    </location>
</feature>
<feature type="domain" description="Deacetylase sirtuin-type" evidence="2">
    <location>
        <begin position="1"/>
        <end position="243"/>
    </location>
</feature>
<feature type="active site" description="Proton acceptor" evidence="2">
    <location>
        <position position="123"/>
    </location>
</feature>
<feature type="binding site" evidence="1">
    <location>
        <position position="24"/>
    </location>
    <ligand>
        <name>NAD(+)</name>
        <dbReference type="ChEBI" id="CHEBI:57540"/>
    </ligand>
</feature>
<feature type="binding site" evidence="1">
    <location>
        <position position="35"/>
    </location>
    <ligand>
        <name>NAD(+)</name>
        <dbReference type="ChEBI" id="CHEBI:57540"/>
    </ligand>
</feature>
<feature type="binding site" evidence="1">
    <location>
        <position position="35"/>
    </location>
    <ligand>
        <name>nicotinamide</name>
        <dbReference type="ChEBI" id="CHEBI:17154"/>
    </ligand>
</feature>
<feature type="binding site" evidence="1">
    <location>
        <position position="36"/>
    </location>
    <ligand>
        <name>NAD(+)</name>
        <dbReference type="ChEBI" id="CHEBI:57540"/>
    </ligand>
</feature>
<feature type="binding site" evidence="1">
    <location>
        <position position="105"/>
    </location>
    <ligand>
        <name>NAD(+)</name>
        <dbReference type="ChEBI" id="CHEBI:57540"/>
    </ligand>
</feature>
<feature type="binding site" evidence="1">
    <location>
        <position position="107"/>
    </location>
    <ligand>
        <name>NAD(+)</name>
        <dbReference type="ChEBI" id="CHEBI:57540"/>
    </ligand>
</feature>
<feature type="binding site" evidence="1">
    <location>
        <position position="107"/>
    </location>
    <ligand>
        <name>nicotinamide</name>
        <dbReference type="ChEBI" id="CHEBI:17154"/>
    </ligand>
</feature>
<feature type="binding site" evidence="1">
    <location>
        <position position="108"/>
    </location>
    <ligand>
        <name>NAD(+)</name>
        <dbReference type="ChEBI" id="CHEBI:57540"/>
    </ligand>
</feature>
<feature type="binding site" evidence="1">
    <location>
        <position position="108"/>
    </location>
    <ligand>
        <name>nicotinamide</name>
        <dbReference type="ChEBI" id="CHEBI:17154"/>
    </ligand>
</feature>
<feature type="binding site" evidence="1">
    <location>
        <position position="123"/>
    </location>
    <ligand>
        <name>NAD(+)</name>
        <dbReference type="ChEBI" id="CHEBI:57540"/>
    </ligand>
</feature>
<feature type="binding site" evidence="1">
    <location>
        <position position="131"/>
    </location>
    <ligand>
        <name>Zn(2+)</name>
        <dbReference type="ChEBI" id="CHEBI:29105"/>
    </ligand>
</feature>
<feature type="binding site" evidence="1">
    <location>
        <position position="134"/>
    </location>
    <ligand>
        <name>Zn(2+)</name>
        <dbReference type="ChEBI" id="CHEBI:29105"/>
    </ligand>
</feature>
<feature type="binding site" evidence="1">
    <location>
        <position position="151"/>
    </location>
    <ligand>
        <name>Zn(2+)</name>
        <dbReference type="ChEBI" id="CHEBI:29105"/>
    </ligand>
</feature>
<feature type="binding site" evidence="1">
    <location>
        <position position="154"/>
    </location>
    <ligand>
        <name>Zn(2+)</name>
        <dbReference type="ChEBI" id="CHEBI:29105"/>
    </ligand>
</feature>
<feature type="binding site" evidence="1">
    <location>
        <position position="192"/>
    </location>
    <ligand>
        <name>NAD(+)</name>
        <dbReference type="ChEBI" id="CHEBI:57540"/>
    </ligand>
</feature>
<feature type="binding site" evidence="1">
    <location>
        <position position="193"/>
    </location>
    <ligand>
        <name>NAD(+)</name>
        <dbReference type="ChEBI" id="CHEBI:57540"/>
    </ligand>
</feature>
<feature type="binding site" evidence="1">
    <location>
        <position position="215"/>
    </location>
    <ligand>
        <name>NAD(+)</name>
        <dbReference type="ChEBI" id="CHEBI:57540"/>
    </ligand>
</feature>
<feature type="binding site" evidence="1">
    <location>
        <position position="232"/>
    </location>
    <ligand>
        <name>NAD(+)</name>
        <dbReference type="ChEBI" id="CHEBI:57540"/>
    </ligand>
</feature>
<name>NPD_STAA8</name>
<reference key="1">
    <citation type="journal article" date="1990" name="J. Bacteriol.">
        <title>Repression and catabolite repression of the lactose operon of Staphylococcus aureus.</title>
        <authorList>
            <person name="Oskouian B."/>
            <person name="Stewart G.C."/>
        </authorList>
    </citation>
    <scope>NUCLEOTIDE SEQUENCE [GENOMIC DNA]</scope>
</reference>
<reference key="2">
    <citation type="book" date="2006" name="Gram positive pathogens, 2nd edition">
        <title>The Staphylococcus aureus NCTC 8325 genome.</title>
        <editorList>
            <person name="Fischetti V."/>
            <person name="Novick R."/>
            <person name="Ferretti J."/>
            <person name="Portnoy D."/>
            <person name="Rood J."/>
        </editorList>
        <authorList>
            <person name="Gillaspy A.F."/>
            <person name="Worrell V."/>
            <person name="Orvis J."/>
            <person name="Roe B.A."/>
            <person name="Dyer D.W."/>
            <person name="Iandolo J.J."/>
        </authorList>
    </citation>
    <scope>NUCLEOTIDE SEQUENCE [LARGE SCALE GENOMIC DNA]</scope>
    <source>
        <strain>NCTC 8325 / PS 47</strain>
    </source>
</reference>
<comment type="function">
    <text evidence="1">NAD-dependent protein deacetylase which modulates the activities of several enzymes which are inactive in their acetylated form.</text>
</comment>
<comment type="catalytic activity">
    <reaction evidence="1">
        <text>N(6)-acetyl-L-lysyl-[protein] + NAD(+) + H2O = 2''-O-acetyl-ADP-D-ribose + nicotinamide + L-lysyl-[protein]</text>
        <dbReference type="Rhea" id="RHEA:43636"/>
        <dbReference type="Rhea" id="RHEA-COMP:9752"/>
        <dbReference type="Rhea" id="RHEA-COMP:10731"/>
        <dbReference type="ChEBI" id="CHEBI:15377"/>
        <dbReference type="ChEBI" id="CHEBI:17154"/>
        <dbReference type="ChEBI" id="CHEBI:29969"/>
        <dbReference type="ChEBI" id="CHEBI:57540"/>
        <dbReference type="ChEBI" id="CHEBI:61930"/>
        <dbReference type="ChEBI" id="CHEBI:83767"/>
        <dbReference type="EC" id="2.3.1.286"/>
    </reaction>
</comment>
<comment type="cofactor">
    <cofactor evidence="1">
        <name>Zn(2+)</name>
        <dbReference type="ChEBI" id="CHEBI:29105"/>
    </cofactor>
    <text evidence="1">Binds 1 zinc ion per subunit.</text>
</comment>
<comment type="subcellular location">
    <subcellularLocation>
        <location evidence="1">Cytoplasm</location>
    </subcellularLocation>
</comment>
<comment type="similarity">
    <text evidence="1">Belongs to the sirtuin family. Class U subfamily.</text>
</comment>
<comment type="sequence caution" evidence="3">
    <conflict type="erroneous initiation">
        <sequence resource="EMBL-CDS" id="ABD31477"/>
    </conflict>
    <text>Extended N-terminus.</text>
</comment>
<proteinExistence type="inferred from homology"/>
<sequence>MKHDLETLKHIIDSSNRITFFTGAGVSVASGVPDFRSMGGLFDEISKDGLSPEYLLSRDYLEDDPEGFINFCHKRLLFVDTMPNIVHDWIAKLERNQQSLGVITQNIDGLHSDAGSQHVDELHGTLNRFYCNVCHKSYTKSDVIDRTLKHCDNCGGAIRPDIVLYGEMLDQPTIIRALNKIEHADTLVVLGSSLVVQPAAGLISHFKGDNLIIINKDRTPYDSDATLVIHDDMVSVVKSLMTE</sequence>
<keyword id="KW-0963">Cytoplasm</keyword>
<keyword id="KW-0479">Metal-binding</keyword>
<keyword id="KW-0520">NAD</keyword>
<keyword id="KW-1185">Reference proteome</keyword>
<keyword id="KW-0808">Transferase</keyword>
<keyword id="KW-0862">Zinc</keyword>
<organism>
    <name type="scientific">Staphylococcus aureus (strain NCTC 8325 / PS 47)</name>
    <dbReference type="NCBI Taxonomy" id="93061"/>
    <lineage>
        <taxon>Bacteria</taxon>
        <taxon>Bacillati</taxon>
        <taxon>Bacillota</taxon>
        <taxon>Bacilli</taxon>
        <taxon>Bacillales</taxon>
        <taxon>Staphylococcaceae</taxon>
        <taxon>Staphylococcus</taxon>
    </lineage>
</organism>
<accession>Q53700</accession>
<accession>Q2FW61</accession>
<dbReference type="EC" id="2.3.1.286" evidence="1 2"/>
<dbReference type="EMBL" id="M32103">
    <property type="protein sequence ID" value="AAA67853.1"/>
    <property type="molecule type" value="Genomic_DNA"/>
</dbReference>
<dbReference type="EMBL" id="CP000253">
    <property type="protein sequence ID" value="ABD31477.1"/>
    <property type="status" value="ALT_INIT"/>
    <property type="molecule type" value="Genomic_DNA"/>
</dbReference>
<dbReference type="RefSeq" id="YP_500924.1">
    <property type="nucleotide sequence ID" value="NC_007795.1"/>
</dbReference>
<dbReference type="SMR" id="Q53700"/>
<dbReference type="STRING" id="93061.SAOUHSC_02457"/>
<dbReference type="PaxDb" id="1280-SAXN108_2450"/>
<dbReference type="GeneID" id="3919020"/>
<dbReference type="KEGG" id="sao:SAOUHSC_02457"/>
<dbReference type="PATRIC" id="fig|93061.5.peg.2216"/>
<dbReference type="eggNOG" id="COG0846">
    <property type="taxonomic scope" value="Bacteria"/>
</dbReference>
<dbReference type="HOGENOM" id="CLU_023643_3_0_9"/>
<dbReference type="OrthoDB" id="9800582at2"/>
<dbReference type="PRO" id="PR:Q53700"/>
<dbReference type="Proteomes" id="UP000008816">
    <property type="component" value="Chromosome"/>
</dbReference>
<dbReference type="GO" id="GO:0005737">
    <property type="term" value="C:cytoplasm"/>
    <property type="evidence" value="ECO:0007669"/>
    <property type="project" value="UniProtKB-SubCell"/>
</dbReference>
<dbReference type="GO" id="GO:0017136">
    <property type="term" value="F:histone deacetylase activity, NAD-dependent"/>
    <property type="evidence" value="ECO:0000318"/>
    <property type="project" value="GO_Central"/>
</dbReference>
<dbReference type="GO" id="GO:0070403">
    <property type="term" value="F:NAD+ binding"/>
    <property type="evidence" value="ECO:0000318"/>
    <property type="project" value="GO_Central"/>
</dbReference>
<dbReference type="GO" id="GO:0008270">
    <property type="term" value="F:zinc ion binding"/>
    <property type="evidence" value="ECO:0007669"/>
    <property type="project" value="UniProtKB-UniRule"/>
</dbReference>
<dbReference type="CDD" id="cd01411">
    <property type="entry name" value="SIR2H"/>
    <property type="match status" value="1"/>
</dbReference>
<dbReference type="Gene3D" id="3.30.1600.10">
    <property type="entry name" value="SIR2/SIRT2 'Small Domain"/>
    <property type="match status" value="1"/>
</dbReference>
<dbReference type="Gene3D" id="3.40.50.1220">
    <property type="entry name" value="TPP-binding domain"/>
    <property type="match status" value="1"/>
</dbReference>
<dbReference type="HAMAP" id="MF_01968">
    <property type="entry name" value="Sirtuin_ClassU"/>
    <property type="match status" value="1"/>
</dbReference>
<dbReference type="InterPro" id="IPR029035">
    <property type="entry name" value="DHS-like_NAD/FAD-binding_dom"/>
</dbReference>
<dbReference type="InterPro" id="IPR050134">
    <property type="entry name" value="NAD-dep_sirtuin_deacylases"/>
</dbReference>
<dbReference type="InterPro" id="IPR003000">
    <property type="entry name" value="Sirtuin"/>
</dbReference>
<dbReference type="InterPro" id="IPR026591">
    <property type="entry name" value="Sirtuin_cat_small_dom_sf"/>
</dbReference>
<dbReference type="InterPro" id="IPR028628">
    <property type="entry name" value="Sirtuin_class_U"/>
</dbReference>
<dbReference type="InterPro" id="IPR026590">
    <property type="entry name" value="Ssirtuin_cat_dom"/>
</dbReference>
<dbReference type="NCBIfam" id="NF001752">
    <property type="entry name" value="PRK00481.1-1"/>
    <property type="match status" value="1"/>
</dbReference>
<dbReference type="PANTHER" id="PTHR11085:SF4">
    <property type="entry name" value="NAD-DEPENDENT PROTEIN DEACYLASE"/>
    <property type="match status" value="1"/>
</dbReference>
<dbReference type="PANTHER" id="PTHR11085">
    <property type="entry name" value="NAD-DEPENDENT PROTEIN DEACYLASE SIRTUIN-5, MITOCHONDRIAL-RELATED"/>
    <property type="match status" value="1"/>
</dbReference>
<dbReference type="Pfam" id="PF02146">
    <property type="entry name" value="SIR2"/>
    <property type="match status" value="1"/>
</dbReference>
<dbReference type="SUPFAM" id="SSF52467">
    <property type="entry name" value="DHS-like NAD/FAD-binding domain"/>
    <property type="match status" value="1"/>
</dbReference>
<dbReference type="PROSITE" id="PS50305">
    <property type="entry name" value="SIRTUIN"/>
    <property type="match status" value="1"/>
</dbReference>
<evidence type="ECO:0000255" key="1">
    <source>
        <dbReference type="HAMAP-Rule" id="MF_01968"/>
    </source>
</evidence>
<evidence type="ECO:0000255" key="2">
    <source>
        <dbReference type="PROSITE-ProRule" id="PRU00236"/>
    </source>
</evidence>
<evidence type="ECO:0000305" key="3"/>